<organism>
    <name type="scientific">Pseudomonas aeruginosa (strain ATCC 15692 / DSM 22644 / CIP 104116 / JCM 14847 / LMG 12228 / 1C / PRS 101 / PAO1)</name>
    <dbReference type="NCBI Taxonomy" id="208964"/>
    <lineage>
        <taxon>Bacteria</taxon>
        <taxon>Pseudomonadati</taxon>
        <taxon>Pseudomonadota</taxon>
        <taxon>Gammaproteobacteria</taxon>
        <taxon>Pseudomonadales</taxon>
        <taxon>Pseudomonadaceae</taxon>
        <taxon>Pseudomonas</taxon>
    </lineage>
</organism>
<gene>
    <name type="primary">glpF</name>
    <name type="ordered locus">PA3581</name>
</gene>
<reference key="1">
    <citation type="journal article" date="1997" name="Microbiology">
        <title>Structure and gene-polypeptide relationships of the region encoding glycerol diffusion facilitator (glpF) and glycerol kinase (glpK) of Pseudomonas aeruginosa.</title>
        <authorList>
            <person name="Schweizer H.P."/>
            <person name="Jump R."/>
            <person name="Po C."/>
        </authorList>
    </citation>
    <scope>NUCLEOTIDE SEQUENCE [GENOMIC DNA]</scope>
    <source>
        <strain>ATCC 15692 / DSM 22644 / CIP 104116 / JCM 14847 / LMG 12228 / 1C / PRS 101 / PAO1</strain>
    </source>
</reference>
<reference key="2">
    <citation type="journal article" date="2000" name="Nature">
        <title>Complete genome sequence of Pseudomonas aeruginosa PAO1, an opportunistic pathogen.</title>
        <authorList>
            <person name="Stover C.K."/>
            <person name="Pham X.-Q.T."/>
            <person name="Erwin A.L."/>
            <person name="Mizoguchi S.D."/>
            <person name="Warrener P."/>
            <person name="Hickey M.J."/>
            <person name="Brinkman F.S.L."/>
            <person name="Hufnagle W.O."/>
            <person name="Kowalik D.J."/>
            <person name="Lagrou M."/>
            <person name="Garber R.L."/>
            <person name="Goltry L."/>
            <person name="Tolentino E."/>
            <person name="Westbrock-Wadman S."/>
            <person name="Yuan Y."/>
            <person name="Brody L.L."/>
            <person name="Coulter S.N."/>
            <person name="Folger K.R."/>
            <person name="Kas A."/>
            <person name="Larbig K."/>
            <person name="Lim R.M."/>
            <person name="Smith K.A."/>
            <person name="Spencer D.H."/>
            <person name="Wong G.K.-S."/>
            <person name="Wu Z."/>
            <person name="Paulsen I.T."/>
            <person name="Reizer J."/>
            <person name="Saier M.H. Jr."/>
            <person name="Hancock R.E.W."/>
            <person name="Lory S."/>
            <person name="Olson M.V."/>
        </authorList>
    </citation>
    <scope>NUCLEOTIDE SEQUENCE [LARGE SCALE GENOMIC DNA]</scope>
    <source>
        <strain>ATCC 15692 / DSM 22644 / CIP 104116 / JCM 14847 / LMG 12228 / 1C / PRS 101 / PAO1</strain>
    </source>
</reference>
<sequence>MTTAAPTPSLFGQCLAEFLGTALLIFFGTGCVAALKVAGASFGLWEISIIWGVGVSMAIYLSAGVSGAHLNPAVSIALWLFAGFEGRKLPFYITAQVAGAFCAAALVYTLYSSLFIEFEQAQNIVRGSQDSLALASVFSTYPHPALSVGQAFLVEVVITAILMAVIMALTDDGNGLPRGPLAPLLIGLLIAVIGSAMGPLTGFAMNPARDFGPKLMTYLAGWGPIAFTGGREIPYFLVPIFAPILGACLGAGGYRVLIARHLPSAAAPAEAEPEKVRAS</sequence>
<dbReference type="EMBL" id="U49666">
    <property type="protein sequence ID" value="AAB57803.1"/>
    <property type="molecule type" value="Genomic_DNA"/>
</dbReference>
<dbReference type="EMBL" id="AE004091">
    <property type="protein sequence ID" value="AAG06969.1"/>
    <property type="molecule type" value="Genomic_DNA"/>
</dbReference>
<dbReference type="PIR" id="G83196">
    <property type="entry name" value="G83196"/>
</dbReference>
<dbReference type="RefSeq" id="NP_252271.1">
    <property type="nucleotide sequence ID" value="NC_002516.2"/>
</dbReference>
<dbReference type="RefSeq" id="WP_003092166.1">
    <property type="nucleotide sequence ID" value="NZ_QZGE01000001.1"/>
</dbReference>
<dbReference type="SMR" id="Q51389"/>
<dbReference type="FunCoup" id="Q51389">
    <property type="interactions" value="141"/>
</dbReference>
<dbReference type="STRING" id="208964.PA3581"/>
<dbReference type="PaxDb" id="208964-PA3581"/>
<dbReference type="GeneID" id="880152"/>
<dbReference type="KEGG" id="pae:PA3581"/>
<dbReference type="PATRIC" id="fig|208964.12.peg.3747"/>
<dbReference type="PseudoCAP" id="PA3581"/>
<dbReference type="HOGENOM" id="CLU_020019_9_3_6"/>
<dbReference type="InParanoid" id="Q51389"/>
<dbReference type="OrthoDB" id="9807293at2"/>
<dbReference type="PhylomeDB" id="Q51389"/>
<dbReference type="BioCyc" id="PAER208964:G1FZ6-3650-MONOMER"/>
<dbReference type="Proteomes" id="UP000002438">
    <property type="component" value="Chromosome"/>
</dbReference>
<dbReference type="GO" id="GO:0005886">
    <property type="term" value="C:plasma membrane"/>
    <property type="evidence" value="ECO:0000318"/>
    <property type="project" value="GO_Central"/>
</dbReference>
<dbReference type="GO" id="GO:0015254">
    <property type="term" value="F:glycerol channel activity"/>
    <property type="evidence" value="ECO:0000318"/>
    <property type="project" value="GO_Central"/>
</dbReference>
<dbReference type="GO" id="GO:0015793">
    <property type="term" value="P:glycerol transmembrane transport"/>
    <property type="evidence" value="ECO:0000318"/>
    <property type="project" value="GO_Central"/>
</dbReference>
<dbReference type="CDD" id="cd00333">
    <property type="entry name" value="MIP"/>
    <property type="match status" value="1"/>
</dbReference>
<dbReference type="Gene3D" id="1.20.1080.10">
    <property type="entry name" value="Glycerol uptake facilitator protein"/>
    <property type="match status" value="1"/>
</dbReference>
<dbReference type="InterPro" id="IPR023271">
    <property type="entry name" value="Aquaporin-like"/>
</dbReference>
<dbReference type="InterPro" id="IPR000425">
    <property type="entry name" value="MIP"/>
</dbReference>
<dbReference type="InterPro" id="IPR050363">
    <property type="entry name" value="MIP/Aquaporin"/>
</dbReference>
<dbReference type="InterPro" id="IPR022357">
    <property type="entry name" value="MIP_CS"/>
</dbReference>
<dbReference type="NCBIfam" id="TIGR00861">
    <property type="entry name" value="MIP"/>
    <property type="match status" value="1"/>
</dbReference>
<dbReference type="PANTHER" id="PTHR43829">
    <property type="entry name" value="AQUAPORIN OR AQUAGLYCEROPORIN RELATED"/>
    <property type="match status" value="1"/>
</dbReference>
<dbReference type="PANTHER" id="PTHR43829:SF9">
    <property type="entry name" value="AQUAPORIN-9"/>
    <property type="match status" value="1"/>
</dbReference>
<dbReference type="Pfam" id="PF00230">
    <property type="entry name" value="MIP"/>
    <property type="match status" value="1"/>
</dbReference>
<dbReference type="PRINTS" id="PR00783">
    <property type="entry name" value="MINTRINSICP"/>
</dbReference>
<dbReference type="SUPFAM" id="SSF81338">
    <property type="entry name" value="Aquaporin-like"/>
    <property type="match status" value="1"/>
</dbReference>
<dbReference type="PROSITE" id="PS00221">
    <property type="entry name" value="MIP"/>
    <property type="match status" value="1"/>
</dbReference>
<comment type="function">
    <text evidence="1">Mediates glycerol diffusion across the cytoplasmic membrane via a pore-type mechanism.</text>
</comment>
<comment type="catalytic activity">
    <reaction evidence="1">
        <text>glycerol(in) = glycerol(out)</text>
        <dbReference type="Rhea" id="RHEA:29675"/>
        <dbReference type="ChEBI" id="CHEBI:17754"/>
    </reaction>
</comment>
<comment type="subcellular location">
    <subcellularLocation>
        <location evidence="1">Cell inner membrane</location>
        <topology evidence="1">Multi-pass membrane protein</topology>
    </subcellularLocation>
</comment>
<comment type="domain">
    <text evidence="2">Aquaporins contain two tandem repeats each containing three membrane-spanning domains and a pore-forming loop with the signature motif Asn-Pro-Ala (NPA).</text>
</comment>
<comment type="similarity">
    <text evidence="2">Belongs to the MIP/aquaporin (TC 1.A.8) family.</text>
</comment>
<name>GLPF_PSEAE</name>
<proteinExistence type="inferred from homology"/>
<evidence type="ECO:0000250" key="1">
    <source>
        <dbReference type="UniProtKB" id="P0AER0"/>
    </source>
</evidence>
<evidence type="ECO:0000305" key="2"/>
<protein>
    <recommendedName>
        <fullName evidence="1">Glycerol uptake facilitator protein</fullName>
    </recommendedName>
    <alternativeName>
        <fullName>Glycerol diffusion facilitator</fullName>
    </alternativeName>
</protein>
<accession>Q51389</accession>
<keyword id="KW-0997">Cell inner membrane</keyword>
<keyword id="KW-1003">Cell membrane</keyword>
<keyword id="KW-0472">Membrane</keyword>
<keyword id="KW-1185">Reference proteome</keyword>
<keyword id="KW-0677">Repeat</keyword>
<keyword id="KW-0812">Transmembrane</keyword>
<keyword id="KW-1133">Transmembrane helix</keyword>
<keyword id="KW-0813">Transport</keyword>
<feature type="chain" id="PRO_0000064084" description="Glycerol uptake facilitator protein">
    <location>
        <begin position="1"/>
        <end position="279"/>
    </location>
</feature>
<feature type="topological domain" description="Cytoplasmic" evidence="1">
    <location>
        <begin position="1"/>
        <end position="8"/>
    </location>
</feature>
<feature type="transmembrane region" description="Helical; Name=M1" evidence="1">
    <location>
        <begin position="9"/>
        <end position="37"/>
    </location>
</feature>
<feature type="topological domain" description="Periplasmic" evidence="1">
    <location>
        <begin position="38"/>
        <end position="42"/>
    </location>
</feature>
<feature type="transmembrane region" description="Helical; Name=M2" evidence="1">
    <location>
        <begin position="43"/>
        <end position="63"/>
    </location>
</feature>
<feature type="topological domain" description="Cytoplasmic" evidence="1">
    <location>
        <begin position="64"/>
        <end position="66"/>
    </location>
</feature>
<feature type="intramembrane region" evidence="1">
    <location>
        <begin position="67"/>
        <end position="70"/>
    </location>
</feature>
<feature type="intramembrane region" description="Helical; Name=M3" evidence="1">
    <location>
        <begin position="71"/>
        <end position="81"/>
    </location>
</feature>
<feature type="topological domain" description="Cytoplasmic" evidence="1">
    <location>
        <begin position="82"/>
        <end position="87"/>
    </location>
</feature>
<feature type="transmembrane region" description="Helical; Name=M4" evidence="1">
    <location>
        <begin position="88"/>
        <end position="111"/>
    </location>
</feature>
<feature type="topological domain" description="Periplasmic" evidence="1">
    <location>
        <begin position="112"/>
        <end position="146"/>
    </location>
</feature>
<feature type="transmembrane region" description="Helical; Name=M5" evidence="1">
    <location>
        <begin position="147"/>
        <end position="172"/>
    </location>
</feature>
<feature type="topological domain" description="Cytoplasmic" evidence="1">
    <location>
        <begin position="173"/>
        <end position="180"/>
    </location>
</feature>
<feature type="transmembrane region" description="Helical; Name=M6" evidence="1">
    <location>
        <begin position="181"/>
        <end position="197"/>
    </location>
</feature>
<feature type="topological domain" description="Periplasmic" evidence="1">
    <location>
        <begin position="198"/>
        <end position="201"/>
    </location>
</feature>
<feature type="intramembrane region" evidence="1">
    <location>
        <begin position="202"/>
        <end position="205"/>
    </location>
</feature>
<feature type="intramembrane region" description="Helical; Name=M7" evidence="1">
    <location>
        <begin position="206"/>
        <end position="219"/>
    </location>
</feature>
<feature type="topological domain" description="Periplasmic" evidence="1">
    <location>
        <begin position="220"/>
        <end position="234"/>
    </location>
</feature>
<feature type="transmembrane region" description="Helical; Name=M8" evidence="1">
    <location>
        <begin position="235"/>
        <end position="257"/>
    </location>
</feature>
<feature type="topological domain" description="Cytoplasmic" evidence="1">
    <location>
        <begin position="258"/>
        <end position="279"/>
    </location>
</feature>
<feature type="short sequence motif" description="NPA 1" evidence="2">
    <location>
        <begin position="71"/>
        <end position="73"/>
    </location>
</feature>
<feature type="short sequence motif" description="NPA 2" evidence="2">
    <location>
        <begin position="206"/>
        <end position="208"/>
    </location>
</feature>
<feature type="sequence conflict" description="In Ref. 1; AAB57803." evidence="2" ref="1">
    <original>A</original>
    <variation>S</variation>
    <location>
        <position position="16"/>
    </location>
</feature>
<feature type="sequence conflict" description="In Ref. 1; AAB57803." evidence="2" ref="1">
    <original>T</original>
    <variation>A</variation>
    <location>
        <position position="29"/>
    </location>
</feature>